<feature type="chain" id="PRO_0000074671" description="UPF0298 protein SE_0821">
    <location>
        <begin position="1"/>
        <end position="83"/>
    </location>
</feature>
<organism>
    <name type="scientific">Staphylococcus epidermidis (strain ATCC 12228 / FDA PCI 1200)</name>
    <dbReference type="NCBI Taxonomy" id="176280"/>
    <lineage>
        <taxon>Bacteria</taxon>
        <taxon>Bacillati</taxon>
        <taxon>Bacillota</taxon>
        <taxon>Bacilli</taxon>
        <taxon>Bacillales</taxon>
        <taxon>Staphylococcaceae</taxon>
        <taxon>Staphylococcus</taxon>
    </lineage>
</organism>
<comment type="subcellular location">
    <subcellularLocation>
        <location evidence="1">Cytoplasm</location>
    </subcellularLocation>
</comment>
<comment type="similarity">
    <text evidence="1">Belongs to the UPF0298 family.</text>
</comment>
<reference key="1">
    <citation type="journal article" date="2003" name="Mol. Microbiol.">
        <title>Genome-based analysis of virulence genes in a non-biofilm-forming Staphylococcus epidermidis strain (ATCC 12228).</title>
        <authorList>
            <person name="Zhang Y.-Q."/>
            <person name="Ren S.-X."/>
            <person name="Li H.-L."/>
            <person name="Wang Y.-X."/>
            <person name="Fu G."/>
            <person name="Yang J."/>
            <person name="Qin Z.-Q."/>
            <person name="Miao Y.-G."/>
            <person name="Wang W.-Y."/>
            <person name="Chen R.-S."/>
            <person name="Shen Y."/>
            <person name="Chen Z."/>
            <person name="Yuan Z.-H."/>
            <person name="Zhao G.-P."/>
            <person name="Qu D."/>
            <person name="Danchin A."/>
            <person name="Wen Y.-M."/>
        </authorList>
    </citation>
    <scope>NUCLEOTIDE SEQUENCE [LARGE SCALE GENOMIC DNA]</scope>
    <source>
        <strain>ATCC 12228 / FDA PCI 1200</strain>
    </source>
</reference>
<dbReference type="EMBL" id="AE015929">
    <property type="protein sequence ID" value="AAO04418.1"/>
    <property type="molecule type" value="Genomic_DNA"/>
</dbReference>
<dbReference type="RefSeq" id="NP_764376.1">
    <property type="nucleotide sequence ID" value="NC_004461.1"/>
</dbReference>
<dbReference type="RefSeq" id="WP_002439362.1">
    <property type="nucleotide sequence ID" value="NZ_WBME01000046.1"/>
</dbReference>
<dbReference type="SMR" id="Q8CSZ8"/>
<dbReference type="KEGG" id="sep:SE_0821"/>
<dbReference type="PATRIC" id="fig|176280.10.peg.795"/>
<dbReference type="eggNOG" id="COG4471">
    <property type="taxonomic scope" value="Bacteria"/>
</dbReference>
<dbReference type="HOGENOM" id="CLU_159890_2_1_9"/>
<dbReference type="OrthoDB" id="2990788at2"/>
<dbReference type="Proteomes" id="UP000001411">
    <property type="component" value="Chromosome"/>
</dbReference>
<dbReference type="GO" id="GO:0005737">
    <property type="term" value="C:cytoplasm"/>
    <property type="evidence" value="ECO:0007669"/>
    <property type="project" value="UniProtKB-SubCell"/>
</dbReference>
<dbReference type="HAMAP" id="MF_01126">
    <property type="entry name" value="UPF0298"/>
    <property type="match status" value="1"/>
</dbReference>
<dbReference type="InterPro" id="IPR016979">
    <property type="entry name" value="DUF2129"/>
</dbReference>
<dbReference type="Pfam" id="PF09902">
    <property type="entry name" value="DUF2129"/>
    <property type="match status" value="1"/>
</dbReference>
<dbReference type="PIRSF" id="PIRSF031653">
    <property type="entry name" value="UCP031653"/>
    <property type="match status" value="1"/>
</dbReference>
<gene>
    <name type="ordered locus">SE_0821</name>
</gene>
<proteinExistence type="inferred from homology"/>
<sequence length="83" mass="10194">MNIIPRTSLIIYLKHMKHERQIRKYGHIVHSNRQRKYVVMYINEADADNIVHKLMQLKYVHDIQGSPYKYLKKTYEKEKHEIQ</sequence>
<accession>Q8CSZ8</accession>
<keyword id="KW-0963">Cytoplasm</keyword>
<evidence type="ECO:0000255" key="1">
    <source>
        <dbReference type="HAMAP-Rule" id="MF_01126"/>
    </source>
</evidence>
<name>Y821_STAES</name>
<protein>
    <recommendedName>
        <fullName evidence="1">UPF0298 protein SE_0821</fullName>
    </recommendedName>
</protein>